<organism>
    <name type="scientific">Chromobacterium violaceum (strain ATCC 12472 / DSM 30191 / JCM 1249 / CCUG 213 / NBRC 12614 / NCIMB 9131 / NCTC 9757 / MK)</name>
    <dbReference type="NCBI Taxonomy" id="243365"/>
    <lineage>
        <taxon>Bacteria</taxon>
        <taxon>Pseudomonadati</taxon>
        <taxon>Pseudomonadota</taxon>
        <taxon>Betaproteobacteria</taxon>
        <taxon>Neisseriales</taxon>
        <taxon>Chromobacteriaceae</taxon>
        <taxon>Chromobacterium</taxon>
    </lineage>
</organism>
<sequence length="461" mass="48610">MTKTVRSETDTFGPIDVPAAALWGAQTQRSLAHFRISSEKMPPELILALARVKRACAEANRGLGKLDDAKAAAIAGAADEVLAGRHDGEFPLSVWQTGSGTQSNMNMNEVLANRASELLGGRRGPGRLVHPNDDVNLGQSSNDIFPTAMHVAAATQVKERLLPSLDLLRHALESKAEAFADVVKIGRTHLQDATPLTLGQEISGWAAQLALSEQAVRAALPMLCQLAVGGTAVGTGLNTDPSFGAAVAARLAEQSGLPFESAGNKFAALAGHEPLVFAHGALKTLAAALMKIANDIRWLASGPRSGLGELSLPENEPGSSIMPGKVNPTQCEAMTMLCCQVLGNDAALAIGAASGNFELNVFKPLIAHNFLQSARLLADGMDSLREHCVDGMEANRARIAELMARSLMLVTALNPHIGYDKAAAIAKHAHRHGTTLREAALALGHLSAEQFDAWVRPEDMV</sequence>
<accession>Q7NZ02</accession>
<evidence type="ECO:0000255" key="1">
    <source>
        <dbReference type="HAMAP-Rule" id="MF_00743"/>
    </source>
</evidence>
<protein>
    <recommendedName>
        <fullName evidence="1">Fumarate hydratase class II</fullName>
        <shortName evidence="1">Fumarase C</shortName>
        <ecNumber evidence="1">4.2.1.2</ecNumber>
    </recommendedName>
    <alternativeName>
        <fullName evidence="1">Aerobic fumarase</fullName>
    </alternativeName>
    <alternativeName>
        <fullName evidence="1">Iron-independent fumarase</fullName>
    </alternativeName>
</protein>
<feature type="chain" id="PRO_0000161270" description="Fumarate hydratase class II">
    <location>
        <begin position="1"/>
        <end position="461"/>
    </location>
</feature>
<feature type="active site" description="Proton donor/acceptor" evidence="1">
    <location>
        <position position="189"/>
    </location>
</feature>
<feature type="active site" evidence="1">
    <location>
        <position position="319"/>
    </location>
</feature>
<feature type="binding site" evidence="1">
    <location>
        <begin position="99"/>
        <end position="101"/>
    </location>
    <ligand>
        <name>substrate</name>
    </ligand>
</feature>
<feature type="binding site" evidence="1">
    <location>
        <position position="127"/>
    </location>
    <ligand>
        <name>substrate</name>
    </ligand>
</feature>
<feature type="binding site" description="in site B" evidence="1">
    <location>
        <begin position="130"/>
        <end position="133"/>
    </location>
    <ligand>
        <name>substrate</name>
    </ligand>
</feature>
<feature type="binding site" evidence="1">
    <location>
        <begin position="140"/>
        <end position="142"/>
    </location>
    <ligand>
        <name>substrate</name>
    </ligand>
</feature>
<feature type="binding site" evidence="1">
    <location>
        <position position="188"/>
    </location>
    <ligand>
        <name>substrate</name>
    </ligand>
</feature>
<feature type="binding site" evidence="1">
    <location>
        <position position="320"/>
    </location>
    <ligand>
        <name>substrate</name>
    </ligand>
</feature>
<feature type="binding site" evidence="1">
    <location>
        <begin position="325"/>
        <end position="327"/>
    </location>
    <ligand>
        <name>substrate</name>
    </ligand>
</feature>
<feature type="site" description="Important for catalytic activity" evidence="1">
    <location>
        <position position="332"/>
    </location>
</feature>
<dbReference type="EC" id="4.2.1.2" evidence="1"/>
<dbReference type="EMBL" id="AE016825">
    <property type="protein sequence ID" value="AAQ58795.1"/>
    <property type="molecule type" value="Genomic_DNA"/>
</dbReference>
<dbReference type="RefSeq" id="WP_011134675.1">
    <property type="nucleotide sequence ID" value="NC_005085.1"/>
</dbReference>
<dbReference type="SMR" id="Q7NZ02"/>
<dbReference type="STRING" id="243365.CV_1120"/>
<dbReference type="KEGG" id="cvi:CV_1120"/>
<dbReference type="eggNOG" id="COG0114">
    <property type="taxonomic scope" value="Bacteria"/>
</dbReference>
<dbReference type="HOGENOM" id="CLU_021594_4_1_4"/>
<dbReference type="OrthoDB" id="9802809at2"/>
<dbReference type="UniPathway" id="UPA00223">
    <property type="reaction ID" value="UER01007"/>
</dbReference>
<dbReference type="Proteomes" id="UP000001424">
    <property type="component" value="Chromosome"/>
</dbReference>
<dbReference type="GO" id="GO:0005737">
    <property type="term" value="C:cytoplasm"/>
    <property type="evidence" value="ECO:0007669"/>
    <property type="project" value="UniProtKB-SubCell"/>
</dbReference>
<dbReference type="GO" id="GO:0004333">
    <property type="term" value="F:fumarate hydratase activity"/>
    <property type="evidence" value="ECO:0007669"/>
    <property type="project" value="UniProtKB-UniRule"/>
</dbReference>
<dbReference type="GO" id="GO:0006106">
    <property type="term" value="P:fumarate metabolic process"/>
    <property type="evidence" value="ECO:0007669"/>
    <property type="project" value="InterPro"/>
</dbReference>
<dbReference type="GO" id="GO:0006108">
    <property type="term" value="P:malate metabolic process"/>
    <property type="evidence" value="ECO:0007669"/>
    <property type="project" value="TreeGrafter"/>
</dbReference>
<dbReference type="GO" id="GO:0006099">
    <property type="term" value="P:tricarboxylic acid cycle"/>
    <property type="evidence" value="ECO:0007669"/>
    <property type="project" value="UniProtKB-UniRule"/>
</dbReference>
<dbReference type="CDD" id="cd01362">
    <property type="entry name" value="Fumarase_classII"/>
    <property type="match status" value="1"/>
</dbReference>
<dbReference type="FunFam" id="1.10.40.30:FF:000002">
    <property type="entry name" value="Fumarate hydratase class II"/>
    <property type="match status" value="1"/>
</dbReference>
<dbReference type="FunFam" id="1.10.275.10:FF:000001">
    <property type="entry name" value="Fumarate hydratase, mitochondrial"/>
    <property type="match status" value="1"/>
</dbReference>
<dbReference type="FunFam" id="1.20.200.10:FF:000001">
    <property type="entry name" value="Fumarate hydratase, mitochondrial"/>
    <property type="match status" value="1"/>
</dbReference>
<dbReference type="Gene3D" id="1.10.40.30">
    <property type="entry name" value="Fumarase/aspartase (C-terminal domain)"/>
    <property type="match status" value="1"/>
</dbReference>
<dbReference type="Gene3D" id="1.20.200.10">
    <property type="entry name" value="Fumarase/aspartase (Central domain)"/>
    <property type="match status" value="1"/>
</dbReference>
<dbReference type="Gene3D" id="1.10.275.10">
    <property type="entry name" value="Fumarase/aspartase (N-terminal domain)"/>
    <property type="match status" value="1"/>
</dbReference>
<dbReference type="HAMAP" id="MF_00743">
    <property type="entry name" value="FumaraseC"/>
    <property type="match status" value="1"/>
</dbReference>
<dbReference type="InterPro" id="IPR005677">
    <property type="entry name" value="Fum_hydII"/>
</dbReference>
<dbReference type="InterPro" id="IPR024083">
    <property type="entry name" value="Fumarase/histidase_N"/>
</dbReference>
<dbReference type="InterPro" id="IPR018951">
    <property type="entry name" value="Fumarase_C_C"/>
</dbReference>
<dbReference type="InterPro" id="IPR020557">
    <property type="entry name" value="Fumarate_lyase_CS"/>
</dbReference>
<dbReference type="InterPro" id="IPR000362">
    <property type="entry name" value="Fumarate_lyase_fam"/>
</dbReference>
<dbReference type="InterPro" id="IPR022761">
    <property type="entry name" value="Fumarate_lyase_N"/>
</dbReference>
<dbReference type="InterPro" id="IPR008948">
    <property type="entry name" value="L-Aspartase-like"/>
</dbReference>
<dbReference type="NCBIfam" id="TIGR00979">
    <property type="entry name" value="fumC_II"/>
    <property type="match status" value="1"/>
</dbReference>
<dbReference type="NCBIfam" id="NF008909">
    <property type="entry name" value="PRK12273.1"/>
    <property type="match status" value="1"/>
</dbReference>
<dbReference type="PANTHER" id="PTHR11444">
    <property type="entry name" value="ASPARTATEAMMONIA/ARGININOSUCCINATE/ADENYLOSUCCINATE LYASE"/>
    <property type="match status" value="1"/>
</dbReference>
<dbReference type="PANTHER" id="PTHR11444:SF1">
    <property type="entry name" value="FUMARATE HYDRATASE, MITOCHONDRIAL"/>
    <property type="match status" value="1"/>
</dbReference>
<dbReference type="Pfam" id="PF10415">
    <property type="entry name" value="FumaraseC_C"/>
    <property type="match status" value="1"/>
</dbReference>
<dbReference type="Pfam" id="PF00206">
    <property type="entry name" value="Lyase_1"/>
    <property type="match status" value="1"/>
</dbReference>
<dbReference type="PRINTS" id="PR00145">
    <property type="entry name" value="ARGSUCLYASE"/>
</dbReference>
<dbReference type="PRINTS" id="PR00149">
    <property type="entry name" value="FUMRATELYASE"/>
</dbReference>
<dbReference type="SUPFAM" id="SSF48557">
    <property type="entry name" value="L-aspartase-like"/>
    <property type="match status" value="1"/>
</dbReference>
<dbReference type="PROSITE" id="PS00163">
    <property type="entry name" value="FUMARATE_LYASES"/>
    <property type="match status" value="1"/>
</dbReference>
<gene>
    <name evidence="1" type="primary">fumC</name>
    <name type="ordered locus">CV_1120</name>
</gene>
<name>FUMC_CHRVO</name>
<keyword id="KW-0963">Cytoplasm</keyword>
<keyword id="KW-0456">Lyase</keyword>
<keyword id="KW-1185">Reference proteome</keyword>
<keyword id="KW-0816">Tricarboxylic acid cycle</keyword>
<comment type="function">
    <text evidence="1">Involved in the TCA cycle. Catalyzes the stereospecific interconversion of fumarate to L-malate.</text>
</comment>
<comment type="catalytic activity">
    <reaction evidence="1">
        <text>(S)-malate = fumarate + H2O</text>
        <dbReference type="Rhea" id="RHEA:12460"/>
        <dbReference type="ChEBI" id="CHEBI:15377"/>
        <dbReference type="ChEBI" id="CHEBI:15589"/>
        <dbReference type="ChEBI" id="CHEBI:29806"/>
        <dbReference type="EC" id="4.2.1.2"/>
    </reaction>
</comment>
<comment type="pathway">
    <text evidence="1">Carbohydrate metabolism; tricarboxylic acid cycle; (S)-malate from fumarate: step 1/1.</text>
</comment>
<comment type="subunit">
    <text evidence="1">Homotetramer.</text>
</comment>
<comment type="subcellular location">
    <subcellularLocation>
        <location evidence="1">Cytoplasm</location>
    </subcellularLocation>
</comment>
<comment type="miscellaneous">
    <text evidence="1">There are 2 substrate-binding sites: the catalytic A site, and the non-catalytic B site that may play a role in the transfer of substrate or product between the active site and the solvent. Alternatively, the B site may bind allosteric effectors.</text>
</comment>
<comment type="similarity">
    <text evidence="1">Belongs to the class-II fumarase/aspartase family. Fumarase subfamily.</text>
</comment>
<reference key="1">
    <citation type="journal article" date="2003" name="Proc. Natl. Acad. Sci. U.S.A.">
        <title>The complete genome sequence of Chromobacterium violaceum reveals remarkable and exploitable bacterial adaptability.</title>
        <authorList>
            <person name="Vasconcelos A.T.R."/>
            <person name="de Almeida D.F."/>
            <person name="Hungria M."/>
            <person name="Guimaraes C.T."/>
            <person name="Antonio R.V."/>
            <person name="Almeida F.C."/>
            <person name="de Almeida L.G.P."/>
            <person name="de Almeida R."/>
            <person name="Alves-Gomes J.A."/>
            <person name="Andrade E.M."/>
            <person name="Araripe J."/>
            <person name="de Araujo M.F.F."/>
            <person name="Astolfi-Filho S."/>
            <person name="Azevedo V."/>
            <person name="Baptista A.J."/>
            <person name="Bataus L.A.M."/>
            <person name="Batista J.S."/>
            <person name="Belo A."/>
            <person name="van den Berg C."/>
            <person name="Bogo M."/>
            <person name="Bonatto S."/>
            <person name="Bordignon J."/>
            <person name="Brigido M.M."/>
            <person name="Brito C.A."/>
            <person name="Brocchi M."/>
            <person name="Burity H.A."/>
            <person name="Camargo A.A."/>
            <person name="Cardoso D.D.P."/>
            <person name="Carneiro N.P."/>
            <person name="Carraro D.M."/>
            <person name="Carvalho C.M.B."/>
            <person name="Cascardo J.C.M."/>
            <person name="Cavada B.S."/>
            <person name="Chueire L.M.O."/>
            <person name="Creczynski-Pasa T.B."/>
            <person name="Cunha-Junior N.C."/>
            <person name="Fagundes N."/>
            <person name="Falcao C.L."/>
            <person name="Fantinatti F."/>
            <person name="Farias I.P."/>
            <person name="Felipe M.S.S."/>
            <person name="Ferrari L.P."/>
            <person name="Ferro J.A."/>
            <person name="Ferro M.I.T."/>
            <person name="Franco G.R."/>
            <person name="Freitas N.S.A."/>
            <person name="Furlan L.R."/>
            <person name="Gazzinelli R.T."/>
            <person name="Gomes E.A."/>
            <person name="Goncalves P.R."/>
            <person name="Grangeiro T.B."/>
            <person name="Grattapaglia D."/>
            <person name="Grisard E.C."/>
            <person name="Hanna E.S."/>
            <person name="Jardim S.N."/>
            <person name="Laurino J."/>
            <person name="Leoi L.C.T."/>
            <person name="Lima L.F.A."/>
            <person name="Loureiro M.F."/>
            <person name="Lyra M.C.C.P."/>
            <person name="Madeira H.M.F."/>
            <person name="Manfio G.P."/>
            <person name="Maranhao A.Q."/>
            <person name="Martins W.S."/>
            <person name="di Mauro S.M.Z."/>
            <person name="de Medeiros S.R.B."/>
            <person name="Meissner R.V."/>
            <person name="Moreira M.A.M."/>
            <person name="Nascimento F.F."/>
            <person name="Nicolas M.F."/>
            <person name="Oliveira J.G."/>
            <person name="Oliveira S.C."/>
            <person name="Paixao R.F.C."/>
            <person name="Parente J.A."/>
            <person name="Pedrosa F.O."/>
            <person name="Pena S.D.J."/>
            <person name="Pereira J.O."/>
            <person name="Pereira M."/>
            <person name="Pinto L.S.R.C."/>
            <person name="Pinto L.S."/>
            <person name="Porto J.I.R."/>
            <person name="Potrich D.P."/>
            <person name="Ramalho-Neto C.E."/>
            <person name="Reis A.M.M."/>
            <person name="Rigo L.U."/>
            <person name="Rondinelli E."/>
            <person name="Santos E.B.P."/>
            <person name="Santos F.R."/>
            <person name="Schneider M.P.C."/>
            <person name="Seuanez H.N."/>
            <person name="Silva A.M.R."/>
            <person name="da Silva A.L.C."/>
            <person name="Silva D.W."/>
            <person name="Silva R."/>
            <person name="Simoes I.C."/>
            <person name="Simon D."/>
            <person name="Soares C.M.A."/>
            <person name="Soares R.B.A."/>
            <person name="Souza E.M."/>
            <person name="Souza K.R.L."/>
            <person name="Souza R.C."/>
            <person name="Steffens M.B.R."/>
            <person name="Steindel M."/>
            <person name="Teixeira S.R."/>
            <person name="Urmenyi T."/>
            <person name="Vettore A."/>
            <person name="Wassem R."/>
            <person name="Zaha A."/>
            <person name="Simpson A.J.G."/>
        </authorList>
    </citation>
    <scope>NUCLEOTIDE SEQUENCE [LARGE SCALE GENOMIC DNA]</scope>
    <source>
        <strain>ATCC 12472 / DSM 30191 / JCM 1249 / CCUG 213 / NBRC 12614 / NCIMB 9131 / NCTC 9757 / MK</strain>
    </source>
</reference>
<proteinExistence type="inferred from homology"/>